<sequence>MFIDKVTNKVNKSVDKTVLKTISKAKEYLSKGGLSLALSANKYEKLVPYNLWYNHELYQITNYTQNNQNMRIRFYNEIMLSPIVSYNEHDLSKIKTLVPNMSLYQPFYPETFYSVWEFLQSEYINQNAMNFLFIGKENKLGSVESLMIYNELYKNNYLNNTYTVWISDNESHDIFSNSYLLKLPKHNYLKQAFKINFLTNTNQLNVYDTIIIDAISQFDDIFDWSKEETDLHANLFYLFTSLKHLKKNTGSILFKFSMMSSQSWFYLFDILFGCFKEYEFFRPKCINPFNSEIYLYLNKFTGNIPKNNILNSILTNLYRQNVTKLFHLNLHHIDINPIFQKYLISRNKWIDNIIDYIDESPQQNNVCYVTKWHNKNNLLQIKDTTNYLDQNNDKYKLSNNSHPKIKSISHNFLLDNNHFKNLLQKRASLNFYKRVMDTRPSRIFLDMSMVHDFSNEYYVTWDYITGTLDFYKNIKNDLKKQYNGEMITTAWIKLYEILNEFPDIIPKKESVKSFHLCEAPGAFVSATHHYMYSLGCELDWYAQTLNPMYENKALDDHYGLMSLYPDKWLFGSKNNNTGDITSSEIIKSYASNKQLSNIDFMTGDAGIYCRPNCLNEQETVMAKINMGQIVCILACLSKGRSAVFKTFLPLTEPLNISLLNLLSSIFEELIFYKPGASNGSNSEIYIVLKSYKGISSSELEMLYLMLDDPKITSTSFITDVICKNFFRSYIKIVSNLIDKQINCLQRNFYYYYNIGELYDLKKNNIYSEYYDEWFNKNKVVYLENTLFS</sequence>
<reference key="1">
    <citation type="journal article" date="2004" name="Science">
        <title>The 1.2-megabase genome sequence of Mimivirus.</title>
        <authorList>
            <person name="Raoult D."/>
            <person name="Audic S."/>
            <person name="Robert C."/>
            <person name="Abergel C."/>
            <person name="Renesto P."/>
            <person name="Ogata H."/>
            <person name="La Scola B."/>
            <person name="Susan M."/>
            <person name="Claverie J.-M."/>
        </authorList>
    </citation>
    <scope>NUCLEOTIDE SEQUENCE [LARGE SCALE GENOMIC DNA]</scope>
    <source>
        <strain>Rowbotham-Bradford</strain>
    </source>
</reference>
<name>YL511_MIMIV</name>
<organismHost>
    <name type="scientific">Acanthamoeba polyphaga</name>
    <name type="common">Amoeba</name>
    <dbReference type="NCBI Taxonomy" id="5757"/>
</organismHost>
<feature type="chain" id="PRO_0000248624" description="Uncharacterized protein L511">
    <location>
        <begin position="1"/>
        <end position="788"/>
    </location>
</feature>
<feature type="domain" description="Adrift-type SAM-dependent 2'-O-MTase" evidence="1">
    <location>
        <begin position="485"/>
        <end position="693"/>
    </location>
</feature>
<feature type="active site" description="Proton acceptor" evidence="1">
    <location>
        <position position="645"/>
    </location>
</feature>
<feature type="binding site" evidence="1">
    <location>
        <position position="521"/>
    </location>
    <ligand>
        <name>S-adenosyl-L-methionine</name>
        <dbReference type="ChEBI" id="CHEBI:59789"/>
    </ligand>
</feature>
<feature type="binding site" evidence="1">
    <location>
        <position position="604"/>
    </location>
    <ligand>
        <name>S-adenosyl-L-methionine</name>
        <dbReference type="ChEBI" id="CHEBI:59789"/>
    </ligand>
</feature>
<organism>
    <name type="scientific">Acanthamoeba polyphaga mimivirus</name>
    <name type="common">APMV</name>
    <dbReference type="NCBI Taxonomy" id="212035"/>
    <lineage>
        <taxon>Viruses</taxon>
        <taxon>Varidnaviria</taxon>
        <taxon>Bamfordvirae</taxon>
        <taxon>Nucleocytoviricota</taxon>
        <taxon>Megaviricetes</taxon>
        <taxon>Imitervirales</taxon>
        <taxon>Mimiviridae</taxon>
        <taxon>Megamimivirinae</taxon>
        <taxon>Mimivirus</taxon>
        <taxon>Mimivirus bradfordmassiliense</taxon>
    </lineage>
</organism>
<dbReference type="EC" id="2.1.1.-"/>
<dbReference type="EMBL" id="AY653733">
    <property type="protein sequence ID" value="AAV50775.1"/>
    <property type="molecule type" value="Genomic_DNA"/>
</dbReference>
<dbReference type="SMR" id="Q5UQ71"/>
<dbReference type="KEGG" id="vg:9925142"/>
<dbReference type="OrthoDB" id="19069at10239"/>
<dbReference type="Proteomes" id="UP000001134">
    <property type="component" value="Genome"/>
</dbReference>
<dbReference type="GO" id="GO:0004483">
    <property type="term" value="F:mRNA (nucleoside-2'-O-)-methyltransferase activity"/>
    <property type="evidence" value="ECO:0007669"/>
    <property type="project" value="TreeGrafter"/>
</dbReference>
<dbReference type="GO" id="GO:0006370">
    <property type="term" value="P:7-methylguanosine mRNA capping"/>
    <property type="evidence" value="ECO:0007669"/>
    <property type="project" value="TreeGrafter"/>
</dbReference>
<dbReference type="GO" id="GO:0032259">
    <property type="term" value="P:methylation"/>
    <property type="evidence" value="ECO:0007669"/>
    <property type="project" value="UniProtKB-KW"/>
</dbReference>
<dbReference type="Gene3D" id="3.40.50.12760">
    <property type="match status" value="1"/>
</dbReference>
<dbReference type="Gene3D" id="3.40.50.10760">
    <property type="entry name" value="Reovirus core"/>
    <property type="match status" value="1"/>
</dbReference>
<dbReference type="InterPro" id="IPR025807">
    <property type="entry name" value="Adrift-typ_MeTrfase"/>
</dbReference>
<dbReference type="InterPro" id="IPR050851">
    <property type="entry name" value="mRNA_Cap_2O-Ribose_MeTrfase"/>
</dbReference>
<dbReference type="InterPro" id="IPR002877">
    <property type="entry name" value="RNA_MeTrfase_FtsJ_dom"/>
</dbReference>
<dbReference type="PANTHER" id="PTHR16121">
    <property type="entry name" value="CAP-SPECIFIC MRNA (NUCLEOSIDE-2'-O-)-METHYLTRANSFERASE 1-RELATED"/>
    <property type="match status" value="1"/>
</dbReference>
<dbReference type="PANTHER" id="PTHR16121:SF2">
    <property type="entry name" value="CAP-SPECIFIC MRNA (NUCLEOSIDE-2'-O-)-METHYLTRANSFERASE 2"/>
    <property type="match status" value="1"/>
</dbReference>
<dbReference type="Pfam" id="PF01728">
    <property type="entry name" value="FtsJ"/>
    <property type="match status" value="1"/>
</dbReference>
<dbReference type="PROSITE" id="PS51614">
    <property type="entry name" value="SAM_MT_ADRIFT"/>
    <property type="match status" value="1"/>
</dbReference>
<proteinExistence type="predicted"/>
<protein>
    <recommendedName>
        <fullName>Uncharacterized protein L511</fullName>
        <ecNumber>2.1.1.-</ecNumber>
    </recommendedName>
</protein>
<accession>Q5UQ71</accession>
<evidence type="ECO:0000255" key="1">
    <source>
        <dbReference type="PROSITE-ProRule" id="PRU00946"/>
    </source>
</evidence>
<keyword id="KW-0489">Methyltransferase</keyword>
<keyword id="KW-1185">Reference proteome</keyword>
<keyword id="KW-0949">S-adenosyl-L-methionine</keyword>
<keyword id="KW-0808">Transferase</keyword>
<gene>
    <name type="ordered locus">MIMI_L511</name>
</gene>